<reference key="1">
    <citation type="submission" date="2006-12" db="EMBL/GenBank/DDBJ databases">
        <title>Complete sequence of chromosome 1 of Paracoccus denitrificans PD1222.</title>
        <authorList>
            <person name="Copeland A."/>
            <person name="Lucas S."/>
            <person name="Lapidus A."/>
            <person name="Barry K."/>
            <person name="Detter J.C."/>
            <person name="Glavina del Rio T."/>
            <person name="Hammon N."/>
            <person name="Israni S."/>
            <person name="Dalin E."/>
            <person name="Tice H."/>
            <person name="Pitluck S."/>
            <person name="Munk A.C."/>
            <person name="Brettin T."/>
            <person name="Bruce D."/>
            <person name="Han C."/>
            <person name="Tapia R."/>
            <person name="Gilna P."/>
            <person name="Schmutz J."/>
            <person name="Larimer F."/>
            <person name="Land M."/>
            <person name="Hauser L."/>
            <person name="Kyrpides N."/>
            <person name="Lykidis A."/>
            <person name="Spiro S."/>
            <person name="Richardson D.J."/>
            <person name="Moir J.W.B."/>
            <person name="Ferguson S.J."/>
            <person name="van Spanning R.J.M."/>
            <person name="Richardson P."/>
        </authorList>
    </citation>
    <scope>NUCLEOTIDE SEQUENCE [LARGE SCALE GENOMIC DNA]</scope>
    <source>
        <strain>Pd 1222</strain>
    </source>
</reference>
<keyword id="KW-0963">Cytoplasm</keyword>
<keyword id="KW-0460">Magnesium</keyword>
<keyword id="KW-0479">Metal-binding</keyword>
<keyword id="KW-0566">Pantothenate biosynthesis</keyword>
<keyword id="KW-1185">Reference proteome</keyword>
<keyword id="KW-0808">Transferase</keyword>
<dbReference type="EC" id="2.1.2.11" evidence="1"/>
<dbReference type="EMBL" id="CP000489">
    <property type="protein sequence ID" value="ABL69754.1"/>
    <property type="molecule type" value="Genomic_DNA"/>
</dbReference>
<dbReference type="RefSeq" id="WP_011747952.1">
    <property type="nucleotide sequence ID" value="NC_008686.1"/>
</dbReference>
<dbReference type="SMR" id="A1B2L0"/>
<dbReference type="STRING" id="318586.Pden_1657"/>
<dbReference type="EnsemblBacteria" id="ABL69754">
    <property type="protein sequence ID" value="ABL69754"/>
    <property type="gene ID" value="Pden_1657"/>
</dbReference>
<dbReference type="GeneID" id="93450049"/>
<dbReference type="KEGG" id="pde:Pden_1657"/>
<dbReference type="eggNOG" id="COG0413">
    <property type="taxonomic scope" value="Bacteria"/>
</dbReference>
<dbReference type="HOGENOM" id="CLU_036645_1_0_5"/>
<dbReference type="OrthoDB" id="9781789at2"/>
<dbReference type="UniPathway" id="UPA00028">
    <property type="reaction ID" value="UER00003"/>
</dbReference>
<dbReference type="Proteomes" id="UP000000361">
    <property type="component" value="Chromosome 1"/>
</dbReference>
<dbReference type="GO" id="GO:0005737">
    <property type="term" value="C:cytoplasm"/>
    <property type="evidence" value="ECO:0007669"/>
    <property type="project" value="UniProtKB-SubCell"/>
</dbReference>
<dbReference type="GO" id="GO:0003864">
    <property type="term" value="F:3-methyl-2-oxobutanoate hydroxymethyltransferase activity"/>
    <property type="evidence" value="ECO:0007669"/>
    <property type="project" value="UniProtKB-UniRule"/>
</dbReference>
<dbReference type="GO" id="GO:0000287">
    <property type="term" value="F:magnesium ion binding"/>
    <property type="evidence" value="ECO:0007669"/>
    <property type="project" value="TreeGrafter"/>
</dbReference>
<dbReference type="GO" id="GO:0015940">
    <property type="term" value="P:pantothenate biosynthetic process"/>
    <property type="evidence" value="ECO:0007669"/>
    <property type="project" value="UniProtKB-UniRule"/>
</dbReference>
<dbReference type="CDD" id="cd06557">
    <property type="entry name" value="KPHMT-like"/>
    <property type="match status" value="1"/>
</dbReference>
<dbReference type="FunFam" id="3.20.20.60:FF:000003">
    <property type="entry name" value="3-methyl-2-oxobutanoate hydroxymethyltransferase"/>
    <property type="match status" value="1"/>
</dbReference>
<dbReference type="Gene3D" id="3.20.20.60">
    <property type="entry name" value="Phosphoenolpyruvate-binding domains"/>
    <property type="match status" value="1"/>
</dbReference>
<dbReference type="HAMAP" id="MF_00156">
    <property type="entry name" value="PanB"/>
    <property type="match status" value="1"/>
</dbReference>
<dbReference type="InterPro" id="IPR003700">
    <property type="entry name" value="Pantoate_hydroxy_MeTrfase"/>
</dbReference>
<dbReference type="InterPro" id="IPR015813">
    <property type="entry name" value="Pyrv/PenolPyrv_kinase-like_dom"/>
</dbReference>
<dbReference type="InterPro" id="IPR040442">
    <property type="entry name" value="Pyrv_kinase-like_dom_sf"/>
</dbReference>
<dbReference type="NCBIfam" id="TIGR00222">
    <property type="entry name" value="panB"/>
    <property type="match status" value="1"/>
</dbReference>
<dbReference type="NCBIfam" id="NF001452">
    <property type="entry name" value="PRK00311.1"/>
    <property type="match status" value="1"/>
</dbReference>
<dbReference type="PANTHER" id="PTHR20881">
    <property type="entry name" value="3-METHYL-2-OXOBUTANOATE HYDROXYMETHYLTRANSFERASE"/>
    <property type="match status" value="1"/>
</dbReference>
<dbReference type="PANTHER" id="PTHR20881:SF0">
    <property type="entry name" value="3-METHYL-2-OXOBUTANOATE HYDROXYMETHYLTRANSFERASE"/>
    <property type="match status" value="1"/>
</dbReference>
<dbReference type="Pfam" id="PF02548">
    <property type="entry name" value="Pantoate_transf"/>
    <property type="match status" value="1"/>
</dbReference>
<dbReference type="PIRSF" id="PIRSF000388">
    <property type="entry name" value="Pantoate_hydroxy_MeTrfase"/>
    <property type="match status" value="1"/>
</dbReference>
<dbReference type="SUPFAM" id="SSF51621">
    <property type="entry name" value="Phosphoenolpyruvate/pyruvate domain"/>
    <property type="match status" value="1"/>
</dbReference>
<accession>A1B2L0</accession>
<organism>
    <name type="scientific">Paracoccus denitrificans (strain Pd 1222)</name>
    <dbReference type="NCBI Taxonomy" id="318586"/>
    <lineage>
        <taxon>Bacteria</taxon>
        <taxon>Pseudomonadati</taxon>
        <taxon>Pseudomonadota</taxon>
        <taxon>Alphaproteobacteria</taxon>
        <taxon>Rhodobacterales</taxon>
        <taxon>Paracoccaceae</taxon>
        <taxon>Paracoccus</taxon>
    </lineage>
</organism>
<feature type="chain" id="PRO_0000297314" description="3-methyl-2-oxobutanoate hydroxymethyltransferase">
    <location>
        <begin position="1"/>
        <end position="276"/>
    </location>
</feature>
<feature type="active site" description="Proton acceptor" evidence="1">
    <location>
        <position position="188"/>
    </location>
</feature>
<feature type="binding site" evidence="1">
    <location>
        <begin position="50"/>
        <end position="51"/>
    </location>
    <ligand>
        <name>3-methyl-2-oxobutanoate</name>
        <dbReference type="ChEBI" id="CHEBI:11851"/>
    </ligand>
</feature>
<feature type="binding site" evidence="1">
    <location>
        <position position="50"/>
    </location>
    <ligand>
        <name>Mg(2+)</name>
        <dbReference type="ChEBI" id="CHEBI:18420"/>
    </ligand>
</feature>
<feature type="binding site" evidence="1">
    <location>
        <position position="89"/>
    </location>
    <ligand>
        <name>3-methyl-2-oxobutanoate</name>
        <dbReference type="ChEBI" id="CHEBI:11851"/>
    </ligand>
</feature>
<feature type="binding site" evidence="1">
    <location>
        <position position="89"/>
    </location>
    <ligand>
        <name>Mg(2+)</name>
        <dbReference type="ChEBI" id="CHEBI:18420"/>
    </ligand>
</feature>
<feature type="binding site" evidence="1">
    <location>
        <position position="119"/>
    </location>
    <ligand>
        <name>3-methyl-2-oxobutanoate</name>
        <dbReference type="ChEBI" id="CHEBI:11851"/>
    </ligand>
</feature>
<feature type="binding site" evidence="1">
    <location>
        <position position="121"/>
    </location>
    <ligand>
        <name>Mg(2+)</name>
        <dbReference type="ChEBI" id="CHEBI:18420"/>
    </ligand>
</feature>
<gene>
    <name evidence="1" type="primary">panB</name>
    <name type="ordered locus">Pden_1657</name>
</gene>
<comment type="function">
    <text evidence="1">Catalyzes the reversible reaction in which hydroxymethyl group from 5,10-methylenetetrahydrofolate is transferred onto alpha-ketoisovalerate to form ketopantoate.</text>
</comment>
<comment type="catalytic activity">
    <reaction evidence="1">
        <text>3-methyl-2-oxobutanoate + (6R)-5,10-methylene-5,6,7,8-tetrahydrofolate + H2O = 2-dehydropantoate + (6S)-5,6,7,8-tetrahydrofolate</text>
        <dbReference type="Rhea" id="RHEA:11824"/>
        <dbReference type="ChEBI" id="CHEBI:11561"/>
        <dbReference type="ChEBI" id="CHEBI:11851"/>
        <dbReference type="ChEBI" id="CHEBI:15377"/>
        <dbReference type="ChEBI" id="CHEBI:15636"/>
        <dbReference type="ChEBI" id="CHEBI:57453"/>
        <dbReference type="EC" id="2.1.2.11"/>
    </reaction>
</comment>
<comment type="cofactor">
    <cofactor evidence="1">
        <name>Mg(2+)</name>
        <dbReference type="ChEBI" id="CHEBI:18420"/>
    </cofactor>
    <text evidence="1">Binds 1 Mg(2+) ion per subunit.</text>
</comment>
<comment type="pathway">
    <text evidence="1">Cofactor biosynthesis; (R)-pantothenate biosynthesis; (R)-pantoate from 3-methyl-2-oxobutanoate: step 1/2.</text>
</comment>
<comment type="subunit">
    <text evidence="1">Homodecamer; pentamer of dimers.</text>
</comment>
<comment type="subcellular location">
    <subcellularLocation>
        <location evidence="1">Cytoplasm</location>
    </subcellularLocation>
</comment>
<comment type="similarity">
    <text evidence="1">Belongs to the PanB family.</text>
</comment>
<sequence length="276" mass="28973">MSATPDRKGQLGPGDIRARKGGEPVVCLTAYTTPMARLVDAHCDIALVGDSLGMVLHGLPSTIGVSMEMMILHGKAVARGCSRACIVVDMPFGSYEEGPEQAFRNAARLMAETGCQAVKLEGGRHMAETVAFLVARGIPVMGHVGLTPQSVNTLGGYKVQGRGHHEADRIAADAAALADAGAFAVVLEKLPEALGRRITQEIAVPTIGIGAGLDCDGQVLVVDDMLGLFSDFRPKFVKRYAELGQDADAAIAAYAAEVRARRFPGPEHVFGEGKPA</sequence>
<proteinExistence type="inferred from homology"/>
<evidence type="ECO:0000255" key="1">
    <source>
        <dbReference type="HAMAP-Rule" id="MF_00156"/>
    </source>
</evidence>
<name>PANB_PARDP</name>
<protein>
    <recommendedName>
        <fullName evidence="1">3-methyl-2-oxobutanoate hydroxymethyltransferase</fullName>
        <ecNumber evidence="1">2.1.2.11</ecNumber>
    </recommendedName>
    <alternativeName>
        <fullName evidence="1">Ketopantoate hydroxymethyltransferase</fullName>
        <shortName evidence="1">KPHMT</shortName>
    </alternativeName>
</protein>